<name>CHEB2_RHOCS</name>
<sequence length="394" mass="41154">MNDSPGRTTVSGPSGGSDPFRVMVVDDSAVIRGLITRALESDPEIKVVASVANGQMAINTLSRQPIDVIVLDIEMPVLDGLSALPHLLQADPNVKIVMASTLTAKGADISLRALRAGAADYIPKPSSTRELTGADTFKRELTEKVKALGAAARRSGPRREGTAAARPPGAAAQPTSGYTLPSPVRAKPETGPLTVRPLPPDGRPDVIAIGSSTGGPQALFEVLGHLRGATQPILITQHMPATFTTILADHITRQCGIQCAEAKDGEPIVGGRAYVAPGDFHFLVVNRNGVPTVQLTKDAPENFCRPAVDPMLRSIVRQWGRRVLSVILTGMGHDGQKGCESVVQAGGVVIGQDEATSVVWGMPGAVATAGLCSAILPLKEIGPFIQKIAARRAA</sequence>
<comment type="function">
    <text evidence="1">Involved in chemotaxis. Part of a chemotaxis signal transduction system that modulates chemotaxis in response to various stimuli. Catalyzes the demethylation of specific methylglutamate residues introduced into the chemoreceptors (methyl-accepting chemotaxis proteins or MCP) by CheR. Also mediates the irreversible deamidation of specific glutamine residues to glutamic acid.</text>
</comment>
<comment type="catalytic activity">
    <reaction evidence="1">
        <text>[protein]-L-glutamate 5-O-methyl ester + H2O = L-glutamyl-[protein] + methanol + H(+)</text>
        <dbReference type="Rhea" id="RHEA:23236"/>
        <dbReference type="Rhea" id="RHEA-COMP:10208"/>
        <dbReference type="Rhea" id="RHEA-COMP:10311"/>
        <dbReference type="ChEBI" id="CHEBI:15377"/>
        <dbReference type="ChEBI" id="CHEBI:15378"/>
        <dbReference type="ChEBI" id="CHEBI:17790"/>
        <dbReference type="ChEBI" id="CHEBI:29973"/>
        <dbReference type="ChEBI" id="CHEBI:82795"/>
        <dbReference type="EC" id="3.1.1.61"/>
    </reaction>
</comment>
<comment type="catalytic activity">
    <reaction evidence="1">
        <text>L-glutaminyl-[protein] + H2O = L-glutamyl-[protein] + NH4(+)</text>
        <dbReference type="Rhea" id="RHEA:16441"/>
        <dbReference type="Rhea" id="RHEA-COMP:10207"/>
        <dbReference type="Rhea" id="RHEA-COMP:10208"/>
        <dbReference type="ChEBI" id="CHEBI:15377"/>
        <dbReference type="ChEBI" id="CHEBI:28938"/>
        <dbReference type="ChEBI" id="CHEBI:29973"/>
        <dbReference type="ChEBI" id="CHEBI:30011"/>
        <dbReference type="EC" id="3.5.1.44"/>
    </reaction>
</comment>
<comment type="subcellular location">
    <subcellularLocation>
        <location evidence="1">Cytoplasm</location>
    </subcellularLocation>
</comment>
<comment type="domain">
    <text evidence="1">Contains a C-terminal catalytic domain, and an N-terminal region which modulates catalytic activity.</text>
</comment>
<comment type="PTM">
    <text evidence="1">Phosphorylated by CheA. Phosphorylation of the N-terminal regulatory domain activates the methylesterase activity.</text>
</comment>
<comment type="similarity">
    <text evidence="1">Belongs to the CheB family.</text>
</comment>
<organism>
    <name type="scientific">Rhodospirillum centenum (strain ATCC 51521 / SW)</name>
    <dbReference type="NCBI Taxonomy" id="414684"/>
    <lineage>
        <taxon>Bacteria</taxon>
        <taxon>Pseudomonadati</taxon>
        <taxon>Pseudomonadota</taxon>
        <taxon>Alphaproteobacteria</taxon>
        <taxon>Rhodospirillales</taxon>
        <taxon>Rhodospirillaceae</taxon>
        <taxon>Rhodospirillum</taxon>
    </lineage>
</organism>
<proteinExistence type="inferred from homology"/>
<dbReference type="EC" id="3.1.1.61" evidence="1"/>
<dbReference type="EC" id="3.5.1.44" evidence="1"/>
<dbReference type="EMBL" id="U64519">
    <property type="protein sequence ID" value="AAB71332.1"/>
    <property type="molecule type" value="Genomic_DNA"/>
</dbReference>
<dbReference type="EMBL" id="CP000613">
    <property type="protein sequence ID" value="ACI99152.1"/>
    <property type="molecule type" value="Genomic_DNA"/>
</dbReference>
<dbReference type="RefSeq" id="WP_012566937.1">
    <property type="nucleotide sequence ID" value="NC_011420.2"/>
</dbReference>
<dbReference type="SMR" id="P72253"/>
<dbReference type="STRING" id="414684.RC1_1755"/>
<dbReference type="KEGG" id="rce:RC1_1755"/>
<dbReference type="eggNOG" id="COG2201">
    <property type="taxonomic scope" value="Bacteria"/>
</dbReference>
<dbReference type="HOGENOM" id="CLU_000445_51_0_5"/>
<dbReference type="OrthoDB" id="9793421at2"/>
<dbReference type="Proteomes" id="UP000001591">
    <property type="component" value="Chromosome"/>
</dbReference>
<dbReference type="GO" id="GO:0005737">
    <property type="term" value="C:cytoplasm"/>
    <property type="evidence" value="ECO:0007669"/>
    <property type="project" value="UniProtKB-SubCell"/>
</dbReference>
<dbReference type="GO" id="GO:0000156">
    <property type="term" value="F:phosphorelay response regulator activity"/>
    <property type="evidence" value="ECO:0007669"/>
    <property type="project" value="InterPro"/>
</dbReference>
<dbReference type="GO" id="GO:0008984">
    <property type="term" value="F:protein-glutamate methylesterase activity"/>
    <property type="evidence" value="ECO:0007669"/>
    <property type="project" value="UniProtKB-UniRule"/>
</dbReference>
<dbReference type="GO" id="GO:0050568">
    <property type="term" value="F:protein-glutamine glutaminase activity"/>
    <property type="evidence" value="ECO:0007669"/>
    <property type="project" value="UniProtKB-UniRule"/>
</dbReference>
<dbReference type="GO" id="GO:0006935">
    <property type="term" value="P:chemotaxis"/>
    <property type="evidence" value="ECO:0007669"/>
    <property type="project" value="UniProtKB-UniRule"/>
</dbReference>
<dbReference type="CDD" id="cd16432">
    <property type="entry name" value="CheB_Rec"/>
    <property type="match status" value="1"/>
</dbReference>
<dbReference type="CDD" id="cd17541">
    <property type="entry name" value="REC_CheB-like"/>
    <property type="match status" value="1"/>
</dbReference>
<dbReference type="Gene3D" id="3.40.50.2300">
    <property type="match status" value="1"/>
</dbReference>
<dbReference type="Gene3D" id="3.40.50.180">
    <property type="entry name" value="Methylesterase CheB, C-terminal domain"/>
    <property type="match status" value="1"/>
</dbReference>
<dbReference type="HAMAP" id="MF_00099">
    <property type="entry name" value="CheB_chemtxs"/>
    <property type="match status" value="1"/>
</dbReference>
<dbReference type="InterPro" id="IPR008248">
    <property type="entry name" value="CheB-like"/>
</dbReference>
<dbReference type="InterPro" id="IPR035909">
    <property type="entry name" value="CheB_C"/>
</dbReference>
<dbReference type="InterPro" id="IPR011006">
    <property type="entry name" value="CheY-like_superfamily"/>
</dbReference>
<dbReference type="InterPro" id="IPR000673">
    <property type="entry name" value="Sig_transdc_resp-reg_Me-estase"/>
</dbReference>
<dbReference type="InterPro" id="IPR001789">
    <property type="entry name" value="Sig_transdc_resp-reg_receiver"/>
</dbReference>
<dbReference type="NCBIfam" id="NF001965">
    <property type="entry name" value="PRK00742.1"/>
    <property type="match status" value="1"/>
</dbReference>
<dbReference type="PANTHER" id="PTHR42872">
    <property type="entry name" value="PROTEIN-GLUTAMATE METHYLESTERASE/PROTEIN-GLUTAMINE GLUTAMINASE"/>
    <property type="match status" value="1"/>
</dbReference>
<dbReference type="PANTHER" id="PTHR42872:SF3">
    <property type="entry name" value="PROTEIN-GLUTAMATE METHYLESTERASE_PROTEIN-GLUTAMINE GLUTAMINASE 1"/>
    <property type="match status" value="1"/>
</dbReference>
<dbReference type="Pfam" id="PF01339">
    <property type="entry name" value="CheB_methylest"/>
    <property type="match status" value="1"/>
</dbReference>
<dbReference type="Pfam" id="PF00072">
    <property type="entry name" value="Response_reg"/>
    <property type="match status" value="1"/>
</dbReference>
<dbReference type="PIRSF" id="PIRSF000876">
    <property type="entry name" value="RR_chemtxs_CheB"/>
    <property type="match status" value="1"/>
</dbReference>
<dbReference type="SMART" id="SM00448">
    <property type="entry name" value="REC"/>
    <property type="match status" value="1"/>
</dbReference>
<dbReference type="SUPFAM" id="SSF52172">
    <property type="entry name" value="CheY-like"/>
    <property type="match status" value="1"/>
</dbReference>
<dbReference type="SUPFAM" id="SSF52738">
    <property type="entry name" value="Methylesterase CheB, C-terminal domain"/>
    <property type="match status" value="1"/>
</dbReference>
<dbReference type="PROSITE" id="PS50122">
    <property type="entry name" value="CHEB"/>
    <property type="match status" value="1"/>
</dbReference>
<dbReference type="PROSITE" id="PS50110">
    <property type="entry name" value="RESPONSE_REGULATORY"/>
    <property type="match status" value="1"/>
</dbReference>
<gene>
    <name evidence="1" type="primary">cheB</name>
    <name type="ordered locus">RC1_1755</name>
</gene>
<evidence type="ECO:0000255" key="1">
    <source>
        <dbReference type="HAMAP-Rule" id="MF_00099"/>
    </source>
</evidence>
<evidence type="ECO:0000256" key="2">
    <source>
        <dbReference type="SAM" id="MobiDB-lite"/>
    </source>
</evidence>
<keyword id="KW-0145">Chemotaxis</keyword>
<keyword id="KW-0963">Cytoplasm</keyword>
<keyword id="KW-0378">Hydrolase</keyword>
<keyword id="KW-0597">Phosphoprotein</keyword>
<keyword id="KW-1185">Reference proteome</keyword>
<protein>
    <recommendedName>
        <fullName>Protein-glutamate methylesterase/protein-glutamine glutaminase of group 2 operon</fullName>
        <ecNumber evidence="1">3.1.1.61</ecNumber>
        <ecNumber evidence="1">3.5.1.44</ecNumber>
    </recommendedName>
</protein>
<feature type="chain" id="PRO_0000158021" description="Protein-glutamate methylesterase/protein-glutamine glutaminase of group 2 operon">
    <location>
        <begin position="1"/>
        <end position="394"/>
    </location>
</feature>
<feature type="domain" description="Response regulatory" evidence="1">
    <location>
        <begin position="21"/>
        <end position="139"/>
    </location>
</feature>
<feature type="domain" description="CheB-type methylesterase" evidence="1">
    <location>
        <begin position="200"/>
        <end position="382"/>
    </location>
</feature>
<feature type="region of interest" description="Disordered" evidence="2">
    <location>
        <begin position="148"/>
        <end position="201"/>
    </location>
</feature>
<feature type="compositionally biased region" description="Low complexity" evidence="2">
    <location>
        <begin position="162"/>
        <end position="172"/>
    </location>
</feature>
<feature type="active site" evidence="1">
    <location>
        <position position="212"/>
    </location>
</feature>
<feature type="active site" evidence="1">
    <location>
        <position position="238"/>
    </location>
</feature>
<feature type="active site" evidence="1">
    <location>
        <position position="334"/>
    </location>
</feature>
<feature type="modified residue" description="4-aspartylphosphate" evidence="1">
    <location>
        <position position="72"/>
    </location>
</feature>
<accession>P72253</accession>
<accession>B6ITD4</accession>
<reference key="1">
    <citation type="journal article" date="1997" name="J. Bacteriol.">
        <title>Analysis of a chemotaxis operon from Rhodospirillum centenum.</title>
        <authorList>
            <person name="Jiang Z.Y."/>
            <person name="Bauer C.E."/>
        </authorList>
    </citation>
    <scope>NUCLEOTIDE SEQUENCE [GENOMIC DNA]</scope>
</reference>
<reference key="2">
    <citation type="submission" date="2007-03" db="EMBL/GenBank/DDBJ databases">
        <title>Genome sequence of Rhodospirillum centenum.</title>
        <authorList>
            <person name="Touchman J.W."/>
            <person name="Bauer C."/>
            <person name="Blankenship R.E."/>
        </authorList>
    </citation>
    <scope>NUCLEOTIDE SEQUENCE [LARGE SCALE GENOMIC DNA]</scope>
    <source>
        <strain>ATCC 51521 / SW</strain>
    </source>
</reference>